<reference evidence="5 6" key="1">
    <citation type="journal article" date="2003" name="Peptides">
        <title>Cloning of the (Thr6)-phyllokinin precursor from Phyllomedusa sauvagei skin confirms a non-consensus tyrosine 0-sulfation motif.</title>
        <authorList>
            <person name="Chen T."/>
            <person name="Shaw C."/>
        </authorList>
    </citation>
    <scope>NUCLEOTIDE SEQUENCE [MRNA]</scope>
    <scope>PROTEIN SEQUENCE OF 52-62</scope>
    <scope>HYDROXYLATION AT PRO-54</scope>
    <scope>SULFATION AT TYR-62</scope>
    <scope>MASS SPECTROMETRY</scope>
    <source>
        <tissue evidence="6">Skin</tissue>
    </source>
</reference>
<organism>
    <name type="scientific">Phyllomedusa sauvagei</name>
    <name type="common">Sauvage's leaf frog</name>
    <dbReference type="NCBI Taxonomy" id="8395"/>
    <lineage>
        <taxon>Eukaryota</taxon>
        <taxon>Metazoa</taxon>
        <taxon>Chordata</taxon>
        <taxon>Craniata</taxon>
        <taxon>Vertebrata</taxon>
        <taxon>Euteleostomi</taxon>
        <taxon>Amphibia</taxon>
        <taxon>Batrachia</taxon>
        <taxon>Anura</taxon>
        <taxon>Neobatrachia</taxon>
        <taxon>Hyloidea</taxon>
        <taxon>Hylidae</taxon>
        <taxon>Phyllomedusinae</taxon>
        <taxon>Phyllomedusa</taxon>
    </lineage>
</organism>
<keyword id="KW-0878">Amphibian defense peptide</keyword>
<keyword id="KW-1222">Bradykinin receptor impairing toxin</keyword>
<keyword id="KW-0903">Direct protein sequencing</keyword>
<keyword id="KW-1213">G-protein coupled receptor impairing toxin</keyword>
<keyword id="KW-0379">Hydroxylation</keyword>
<keyword id="KW-0964">Secreted</keyword>
<keyword id="KW-0732">Signal</keyword>
<keyword id="KW-0765">Sulfation</keyword>
<keyword id="KW-0800">Toxin</keyword>
<proteinExistence type="evidence at protein level"/>
<accession>Q800F1</accession>
<name>BRK1_PHYSA</name>
<comment type="function">
    <molecule>[Thr6]-bradykinin</molecule>
    <text evidence="1">Inhibits ACE with a Ki of 1.6 uM, and targets B2 bradykinin receptor (BDKRB2). Provokes contraction of smooth muscle preparation (ileum). In vivo, induces an early hyperalgesic effects in living rats after intraplantar injection (By similarity).</text>
</comment>
<comment type="subcellular location">
    <subcellularLocation>
        <location evidence="5">Secreted</location>
    </subcellularLocation>
</comment>
<comment type="tissue specificity">
    <text evidence="5">Expressed by the skin glands.</text>
</comment>
<comment type="mass spectrometry" mass="1447.79" method="MALDI" evidence="4">
    <molecule>[Thr6]-phyllokinin</molecule>
    <text>Hydroxylated.</text>
</comment>
<comment type="mass spectrometry" mass="1431.87" method="MALDI" evidence="4">
    <molecule>[Thr6]-phyllokinin</molecule>
</comment>
<comment type="mass spectrometry" mass="1090.63" method="MALDI" evidence="4">
    <molecule>[Thr6]-bradykinin</molecule>
    <text>Hydroxylated.</text>
</comment>
<comment type="mass spectrometry" mass="1074.78" method="MALDI" evidence="4">
    <molecule>[Thr6]-bradykinin</molecule>
</comment>
<comment type="similarity">
    <text evidence="5">Belongs to the frog skin active peptide (FSAP) family. Bradykinin-related peptide subfamily.</text>
</comment>
<dbReference type="EMBL" id="AJ549500">
    <property type="protein sequence ID" value="CAD70705.1"/>
    <property type="molecule type" value="mRNA"/>
</dbReference>
<dbReference type="TCDB" id="1.C.52.1.14">
    <property type="family name" value="the dermaseptin (dermaseptin) family"/>
</dbReference>
<dbReference type="GO" id="GO:0005576">
    <property type="term" value="C:extracellular region"/>
    <property type="evidence" value="ECO:0007669"/>
    <property type="project" value="UniProtKB-SubCell"/>
</dbReference>
<dbReference type="GO" id="GO:0090729">
    <property type="term" value="F:toxin activity"/>
    <property type="evidence" value="ECO:0007669"/>
    <property type="project" value="UniProtKB-KW"/>
</dbReference>
<dbReference type="GO" id="GO:0006952">
    <property type="term" value="P:defense response"/>
    <property type="evidence" value="ECO:0007669"/>
    <property type="project" value="UniProtKB-KW"/>
</dbReference>
<dbReference type="InterPro" id="IPR004275">
    <property type="entry name" value="Frog_antimicrobial_propeptide"/>
</dbReference>
<dbReference type="Pfam" id="PF03032">
    <property type="entry name" value="FSAP_sig_propep"/>
    <property type="match status" value="1"/>
</dbReference>
<evidence type="ECO:0000250" key="1"/>
<evidence type="ECO:0000255" key="2"/>
<evidence type="ECO:0000256" key="3">
    <source>
        <dbReference type="SAM" id="MobiDB-lite"/>
    </source>
</evidence>
<evidence type="ECO:0000269" key="4">
    <source>
    </source>
</evidence>
<evidence type="ECO:0000305" key="5"/>
<evidence type="ECO:0000312" key="6">
    <source>
        <dbReference type="EMBL" id="CAD70705.1"/>
    </source>
</evidence>
<sequence length="62" mass="7382">MDILKKSLFLVLFLGLVSFSICEEEKRDTEEEENDDEIEEESEEKKREAPERPPGFTPFRIY</sequence>
<feature type="signal peptide" evidence="2">
    <location>
        <begin position="1"/>
        <end position="22"/>
    </location>
</feature>
<feature type="chain" id="PRO_0000043216" description="Kininogen-1" evidence="2">
    <location>
        <begin position="23"/>
        <end position="62"/>
    </location>
</feature>
<feature type="peptide" id="PRO_0000043217" description="[Thr6]-phyllokinin">
    <location>
        <begin position="52"/>
        <end position="62"/>
    </location>
</feature>
<feature type="peptide" id="PRO_0000043218" description="[Thr6]-bradykinin">
    <location>
        <begin position="52"/>
        <end position="60"/>
    </location>
</feature>
<feature type="region of interest" description="Disordered" evidence="3">
    <location>
        <begin position="24"/>
        <end position="62"/>
    </location>
</feature>
<feature type="compositionally biased region" description="Acidic residues" evidence="3">
    <location>
        <begin position="30"/>
        <end position="42"/>
    </location>
</feature>
<feature type="modified residue" description="4-hydroxyproline; partial" evidence="4">
    <location>
        <position position="54"/>
    </location>
</feature>
<feature type="modified residue" description="Sulfotyrosine" evidence="4">
    <location>
        <position position="62"/>
    </location>
</feature>
<protein>
    <recommendedName>
        <fullName>Kininogen-1</fullName>
    </recommendedName>
    <component>
        <recommendedName>
            <fullName>[Thr6]-phyllokinin</fullName>
        </recommendedName>
    </component>
    <component>
        <recommendedName>
            <fullName>[Thr6]-bradykinin</fullName>
        </recommendedName>
    </component>
</protein>